<organism>
    <name type="scientific">Tityus fasciolatus</name>
    <name type="common">Central Brazilian scorpion</name>
    <dbReference type="NCBI Taxonomy" id="203543"/>
    <lineage>
        <taxon>Eukaryota</taxon>
        <taxon>Metazoa</taxon>
        <taxon>Ecdysozoa</taxon>
        <taxon>Arthropoda</taxon>
        <taxon>Chelicerata</taxon>
        <taxon>Arachnida</taxon>
        <taxon>Scorpiones</taxon>
        <taxon>Buthida</taxon>
        <taxon>Buthoidea</taxon>
        <taxon>Buthidae</taxon>
        <taxon>Tityus</taxon>
    </lineage>
</organism>
<name>SCX2_TITFA</name>
<proteinExistence type="evidence at protein level"/>
<accession>C0HJM9</accession>
<sequence>MKRFLLFISILMMIGTIVVGKEGYAMDHEGCKFSCFIRPSGFCDGYCKTHLKASSGYCAWPACYCYGVPSNIKVWDYATNKCGK</sequence>
<reference key="1">
    <citation type="journal article" date="2015" name="PLoS ONE">
        <title>The Scorpion Toxin Tf2 from Tityus fasciolatus Promotes Nav1.3 Opening.</title>
        <authorList>
            <person name="Camargos T.S."/>
            <person name="Bosmans F."/>
            <person name="Rego S.C."/>
            <person name="Mourao C.B."/>
            <person name="Schwartz E.F."/>
        </authorList>
    </citation>
    <scope>NUCLEOTIDE SEQUENCE [MRNA]</scope>
    <scope>PROTEIN SEQUENCE OF 21-82</scope>
    <scope>FUNCTION</scope>
    <scope>SUBCELLULAR LOCATION</scope>
    <scope>PRESENCE OF DISULFIDE BONDS</scope>
    <scope>MASS SPECTROMETRY</scope>
    <scope>AMIDATION AT CYS-82</scope>
    <source>
        <tissue>Venom</tissue>
    </source>
</reference>
<dbReference type="SMR" id="C0HJM9"/>
<dbReference type="GO" id="GO:0005576">
    <property type="term" value="C:extracellular region"/>
    <property type="evidence" value="ECO:0000314"/>
    <property type="project" value="UniProtKB"/>
</dbReference>
<dbReference type="GO" id="GO:0019871">
    <property type="term" value="F:sodium channel inhibitor activity"/>
    <property type="evidence" value="ECO:0007669"/>
    <property type="project" value="InterPro"/>
</dbReference>
<dbReference type="GO" id="GO:0090729">
    <property type="term" value="F:toxin activity"/>
    <property type="evidence" value="ECO:0007669"/>
    <property type="project" value="UniProtKB-KW"/>
</dbReference>
<dbReference type="GO" id="GO:0006952">
    <property type="term" value="P:defense response"/>
    <property type="evidence" value="ECO:0007669"/>
    <property type="project" value="InterPro"/>
</dbReference>
<dbReference type="GO" id="GO:0044493">
    <property type="term" value="P:envenomation resulting in negative regulation of voltage-gated sodium channel activity in another organism"/>
    <property type="evidence" value="ECO:0000314"/>
    <property type="project" value="UniProtKB"/>
</dbReference>
<dbReference type="CDD" id="cd23106">
    <property type="entry name" value="neurotoxins_LC_scorpion"/>
    <property type="match status" value="1"/>
</dbReference>
<dbReference type="FunFam" id="3.30.30.10:FF:000002">
    <property type="entry name" value="Alpha-like toxin BmK-M1"/>
    <property type="match status" value="1"/>
</dbReference>
<dbReference type="Gene3D" id="3.30.30.10">
    <property type="entry name" value="Knottin, scorpion toxin-like"/>
    <property type="match status" value="1"/>
</dbReference>
<dbReference type="InterPro" id="IPR044062">
    <property type="entry name" value="LCN-type_CS_alpha_beta_dom"/>
</dbReference>
<dbReference type="InterPro" id="IPR003614">
    <property type="entry name" value="Scorpion_toxin-like"/>
</dbReference>
<dbReference type="InterPro" id="IPR036574">
    <property type="entry name" value="Scorpion_toxin-like_sf"/>
</dbReference>
<dbReference type="InterPro" id="IPR018218">
    <property type="entry name" value="Scorpion_toxinL"/>
</dbReference>
<dbReference type="InterPro" id="IPR002061">
    <property type="entry name" value="Scorpion_toxinL/defensin"/>
</dbReference>
<dbReference type="Pfam" id="PF00537">
    <property type="entry name" value="Toxin_3"/>
    <property type="match status" value="1"/>
</dbReference>
<dbReference type="PRINTS" id="PR00285">
    <property type="entry name" value="SCORPNTOXIN"/>
</dbReference>
<dbReference type="SMART" id="SM00505">
    <property type="entry name" value="Knot1"/>
    <property type="match status" value="1"/>
</dbReference>
<dbReference type="SUPFAM" id="SSF57095">
    <property type="entry name" value="Scorpion toxin-like"/>
    <property type="match status" value="1"/>
</dbReference>
<dbReference type="PROSITE" id="PS51863">
    <property type="entry name" value="LCN_CSAB"/>
    <property type="match status" value="1"/>
</dbReference>
<evidence type="ECO:0000255" key="1">
    <source>
        <dbReference type="PROSITE-ProRule" id="PRU01210"/>
    </source>
</evidence>
<evidence type="ECO:0000269" key="2">
    <source>
    </source>
</evidence>
<evidence type="ECO:0000303" key="3">
    <source>
    </source>
</evidence>
<evidence type="ECO:0000305" key="4"/>
<evidence type="ECO:0000305" key="5">
    <source>
    </source>
</evidence>
<feature type="signal peptide" evidence="2">
    <location>
        <begin position="1"/>
        <end position="20"/>
    </location>
</feature>
<feature type="chain" id="PRO_0000440617" description="Toxin Tf2" evidence="2">
    <location>
        <begin position="21"/>
        <end position="82"/>
    </location>
</feature>
<feature type="domain" description="LCN-type CS-alpha/beta" evidence="1">
    <location>
        <begin position="21"/>
        <end position="83"/>
    </location>
</feature>
<feature type="modified residue" description="Cysteine amide" evidence="2">
    <location>
        <position position="82"/>
    </location>
</feature>
<feature type="disulfide bond" evidence="1">
    <location>
        <begin position="31"/>
        <end position="82"/>
    </location>
</feature>
<feature type="disulfide bond" evidence="1">
    <location>
        <begin position="35"/>
        <end position="58"/>
    </location>
</feature>
<feature type="disulfide bond" evidence="1">
    <location>
        <begin position="43"/>
        <end position="63"/>
    </location>
</feature>
<feature type="disulfide bond" evidence="1">
    <location>
        <begin position="47"/>
        <end position="65"/>
    </location>
</feature>
<keyword id="KW-0027">Amidation</keyword>
<keyword id="KW-0903">Direct protein sequencing</keyword>
<keyword id="KW-1015">Disulfide bond</keyword>
<keyword id="KW-0872">Ion channel impairing toxin</keyword>
<keyword id="KW-0528">Neurotoxin</keyword>
<keyword id="KW-0964">Secreted</keyword>
<keyword id="KW-0732">Signal</keyword>
<keyword id="KW-0800">Toxin</keyword>
<keyword id="KW-0738">Voltage-gated sodium channel impairing toxin</keyword>
<protein>
    <recommendedName>
        <fullName evidence="3">Toxin Tf2</fullName>
    </recommendedName>
</protein>
<comment type="function">
    <text evidence="2">Beta toxins bind voltage-independently at site-4 of sodium channels (Nav) and shift the voltage of activation toward more negative potentials thereby affecting sodium channel activation and promoting spontaneous and repetitive firing. This toxin is active against hNav1.3/SCN3A.</text>
</comment>
<comment type="subcellular location">
    <subcellularLocation>
        <location evidence="2">Secreted</location>
    </subcellularLocation>
</comment>
<comment type="tissue specificity">
    <text evidence="5">Expressed by the venom gland.</text>
</comment>
<comment type="domain">
    <text evidence="4">Has the structural arrangement of an alpha-helix connected to antiparallel beta-sheets by disulfide bonds (CS-alpha/beta).</text>
</comment>
<comment type="PTM">
    <text evidence="2">Contains 4 disulfide bonds.</text>
</comment>
<comment type="mass spectrometry"/>
<comment type="miscellaneous">
    <text evidence="2">Negative results: does not affect mammalian sodium channels Nav1.1/SCN1A, Nav1.2/SCN2A, Nav1.4/SCN4A, Nav1.5/SCN5A, Nav1.6/SCN8A, Nav1.7/SCN9A and Nav1.8/SCN10A.</text>
</comment>
<comment type="similarity">
    <text evidence="4">Belongs to the long (4 C-C) scorpion toxin superfamily. Sodium channel inhibitor family. Beta subfamily.</text>
</comment>